<protein>
    <recommendedName>
        <fullName>Mytimycin</fullName>
    </recommendedName>
</protein>
<accession>P81614</accession>
<keyword id="KW-0044">Antibiotic</keyword>
<keyword id="KW-0929">Antimicrobial</keyword>
<keyword id="KW-0903">Direct protein sequencing</keyword>
<keyword id="KW-0295">Fungicide</keyword>
<keyword id="KW-0964">Secreted</keyword>
<dbReference type="GO" id="GO:0005576">
    <property type="term" value="C:extracellular region"/>
    <property type="evidence" value="ECO:0007669"/>
    <property type="project" value="UniProtKB-SubCell"/>
</dbReference>
<dbReference type="GO" id="GO:0042742">
    <property type="term" value="P:defense response to bacterium"/>
    <property type="evidence" value="ECO:0007669"/>
    <property type="project" value="UniProtKB-KW"/>
</dbReference>
<dbReference type="GO" id="GO:0050832">
    <property type="term" value="P:defense response to fungus"/>
    <property type="evidence" value="ECO:0007669"/>
    <property type="project" value="UniProtKB-KW"/>
</dbReference>
<dbReference type="GO" id="GO:0031640">
    <property type="term" value="P:killing of cells of another organism"/>
    <property type="evidence" value="ECO:0007669"/>
    <property type="project" value="UniProtKB-KW"/>
</dbReference>
<proteinExistence type="evidence at protein level"/>
<sequence length="33" mass="3854">DCCRKPFRKHCWDCTAGTPYYGYSTRNIFGCTC</sequence>
<organism>
    <name type="scientific">Mytilus edulis</name>
    <name type="common">Blue mussel</name>
    <dbReference type="NCBI Taxonomy" id="6550"/>
    <lineage>
        <taxon>Eukaryota</taxon>
        <taxon>Metazoa</taxon>
        <taxon>Spiralia</taxon>
        <taxon>Lophotrochozoa</taxon>
        <taxon>Mollusca</taxon>
        <taxon>Bivalvia</taxon>
        <taxon>Autobranchia</taxon>
        <taxon>Pteriomorphia</taxon>
        <taxon>Mytilida</taxon>
        <taxon>Mytiloidea</taxon>
        <taxon>Mytilidae</taxon>
        <taxon>Mytilinae</taxon>
        <taxon>Mytilus</taxon>
    </lineage>
</organism>
<feature type="chain" id="PRO_0000127115" description="Mytimycin">
    <location>
        <begin position="1"/>
        <end position="33" status="greater than"/>
    </location>
</feature>
<feature type="non-terminal residue">
    <location>
        <position position="33"/>
    </location>
</feature>
<comment type="function">
    <text>Has antifungal activity against N.crassa and F.culmorum.</text>
</comment>
<comment type="subcellular location">
    <subcellularLocation>
        <location>Secreted</location>
    </subcellularLocation>
</comment>
<comment type="mass spectrometry" mass="6233.5" method="MALDI" evidence="1"/>
<reference key="1">
    <citation type="journal article" date="1996" name="J. Biol. Chem.">
        <title>Innate immunity. Isolation of several cysteine-rich antimicrobial peptides from the blood of a mollusc, Mytilus edulis.</title>
        <authorList>
            <person name="Charlet M."/>
            <person name="Chernysh S."/>
            <person name="Philippe H."/>
            <person name="Hetru C."/>
            <person name="Hoffman J.A."/>
            <person name="Bulet P."/>
        </authorList>
    </citation>
    <scope>PROTEIN SEQUENCE</scope>
    <scope>CHARACTERIZATION</scope>
    <scope>MASS SPECTROMETRY</scope>
    <source>
        <tissue>Blood</tissue>
    </source>
</reference>
<name>MYMY_MYTED</name>
<evidence type="ECO:0000269" key="1">
    <source>
    </source>
</evidence>